<accession>Q2YUF0</accession>
<evidence type="ECO:0000255" key="1">
    <source>
        <dbReference type="HAMAP-Rule" id="MF_01026"/>
    </source>
</evidence>
<name>LEUC_STAAB</name>
<dbReference type="EC" id="4.2.1.33" evidence="1"/>
<dbReference type="EMBL" id="AJ938182">
    <property type="protein sequence ID" value="CAI81633.1"/>
    <property type="molecule type" value="Genomic_DNA"/>
</dbReference>
<dbReference type="RefSeq" id="WP_000531823.1">
    <property type="nucleotide sequence ID" value="NC_007622.1"/>
</dbReference>
<dbReference type="SMR" id="Q2YUF0"/>
<dbReference type="KEGG" id="sab:SAB1944"/>
<dbReference type="HOGENOM" id="CLU_006714_3_4_9"/>
<dbReference type="UniPathway" id="UPA00048">
    <property type="reaction ID" value="UER00071"/>
</dbReference>
<dbReference type="GO" id="GO:0003861">
    <property type="term" value="F:3-isopropylmalate dehydratase activity"/>
    <property type="evidence" value="ECO:0007669"/>
    <property type="project" value="UniProtKB-UniRule"/>
</dbReference>
<dbReference type="GO" id="GO:0051539">
    <property type="term" value="F:4 iron, 4 sulfur cluster binding"/>
    <property type="evidence" value="ECO:0007669"/>
    <property type="project" value="UniProtKB-KW"/>
</dbReference>
<dbReference type="GO" id="GO:0046872">
    <property type="term" value="F:metal ion binding"/>
    <property type="evidence" value="ECO:0007669"/>
    <property type="project" value="UniProtKB-KW"/>
</dbReference>
<dbReference type="GO" id="GO:0009098">
    <property type="term" value="P:L-leucine biosynthetic process"/>
    <property type="evidence" value="ECO:0007669"/>
    <property type="project" value="UniProtKB-UniRule"/>
</dbReference>
<dbReference type="CDD" id="cd01583">
    <property type="entry name" value="IPMI"/>
    <property type="match status" value="1"/>
</dbReference>
<dbReference type="Gene3D" id="3.30.499.10">
    <property type="entry name" value="Aconitase, domain 3"/>
    <property type="match status" value="2"/>
</dbReference>
<dbReference type="HAMAP" id="MF_01026">
    <property type="entry name" value="LeuC_type1"/>
    <property type="match status" value="1"/>
</dbReference>
<dbReference type="InterPro" id="IPR004430">
    <property type="entry name" value="3-IsopropMal_deHydase_lsu"/>
</dbReference>
<dbReference type="InterPro" id="IPR015931">
    <property type="entry name" value="Acnase/IPM_dHydase_lsu_aba_1/3"/>
</dbReference>
<dbReference type="InterPro" id="IPR001030">
    <property type="entry name" value="Acoase/IPM_deHydtase_lsu_aba"/>
</dbReference>
<dbReference type="InterPro" id="IPR018136">
    <property type="entry name" value="Aconitase_4Fe-4S_BS"/>
</dbReference>
<dbReference type="InterPro" id="IPR036008">
    <property type="entry name" value="Aconitase_4Fe-4S_dom"/>
</dbReference>
<dbReference type="InterPro" id="IPR050067">
    <property type="entry name" value="IPM_dehydratase_rel_enz"/>
</dbReference>
<dbReference type="InterPro" id="IPR033941">
    <property type="entry name" value="IPMI_cat"/>
</dbReference>
<dbReference type="NCBIfam" id="TIGR00170">
    <property type="entry name" value="leuC"/>
    <property type="match status" value="1"/>
</dbReference>
<dbReference type="NCBIfam" id="NF004016">
    <property type="entry name" value="PRK05478.1"/>
    <property type="match status" value="1"/>
</dbReference>
<dbReference type="NCBIfam" id="NF009116">
    <property type="entry name" value="PRK12466.1"/>
    <property type="match status" value="1"/>
</dbReference>
<dbReference type="PANTHER" id="PTHR43822:SF9">
    <property type="entry name" value="3-ISOPROPYLMALATE DEHYDRATASE"/>
    <property type="match status" value="1"/>
</dbReference>
<dbReference type="PANTHER" id="PTHR43822">
    <property type="entry name" value="HOMOACONITASE, MITOCHONDRIAL-RELATED"/>
    <property type="match status" value="1"/>
</dbReference>
<dbReference type="Pfam" id="PF00330">
    <property type="entry name" value="Aconitase"/>
    <property type="match status" value="1"/>
</dbReference>
<dbReference type="PRINTS" id="PR00415">
    <property type="entry name" value="ACONITASE"/>
</dbReference>
<dbReference type="SUPFAM" id="SSF53732">
    <property type="entry name" value="Aconitase iron-sulfur domain"/>
    <property type="match status" value="1"/>
</dbReference>
<dbReference type="PROSITE" id="PS00450">
    <property type="entry name" value="ACONITASE_1"/>
    <property type="match status" value="1"/>
</dbReference>
<dbReference type="PROSITE" id="PS01244">
    <property type="entry name" value="ACONITASE_2"/>
    <property type="match status" value="1"/>
</dbReference>
<proteinExistence type="inferred from homology"/>
<comment type="function">
    <text evidence="1">Catalyzes the isomerization between 2-isopropylmalate and 3-isopropylmalate, via the formation of 2-isopropylmaleate.</text>
</comment>
<comment type="catalytic activity">
    <reaction evidence="1">
        <text>(2R,3S)-3-isopropylmalate = (2S)-2-isopropylmalate</text>
        <dbReference type="Rhea" id="RHEA:32287"/>
        <dbReference type="ChEBI" id="CHEBI:1178"/>
        <dbReference type="ChEBI" id="CHEBI:35121"/>
        <dbReference type="EC" id="4.2.1.33"/>
    </reaction>
</comment>
<comment type="cofactor">
    <cofactor evidence="1">
        <name>[4Fe-4S] cluster</name>
        <dbReference type="ChEBI" id="CHEBI:49883"/>
    </cofactor>
    <text evidence="1">Binds 1 [4Fe-4S] cluster per subunit.</text>
</comment>
<comment type="pathway">
    <text evidence="1">Amino-acid biosynthesis; L-leucine biosynthesis; L-leucine from 3-methyl-2-oxobutanoate: step 2/4.</text>
</comment>
<comment type="subunit">
    <text evidence="1">Heterodimer of LeuC and LeuD.</text>
</comment>
<comment type="similarity">
    <text evidence="1">Belongs to the aconitase/IPM isomerase family. LeuC type 1 subfamily.</text>
</comment>
<sequence length="456" mass="50326">MGQTLFDKVWNRHVLYGKLGEPQLLYIDLHLIHEVTSPQAFEGLRLQNRKLRRPDLTFATLDHNVPTIDIFNIKDEIANKQITTLQKNAIDFGVHIFDMGSDEQGIVHMVGPETGLTQPGKTIVCGDSHTATHGAFGAIAFGIGTSEVEHVFATQTLWQTKPKNLKIDINGTLPTGVYAKDIILHLIKTYGVDFGTGYALEFTGETIKNLSMDGRMTICNMAIEGGAKYGIIQPDDITFEYVKGRPFADNFAKSVDKWRELYSDDDAIFDRVIELDVSTLEPQVTWGTNPEMGVNFSEPFPEINDINDQRAYDYMGLEPGQKAEDIDLGYVFLGSCTNARLSDLIEASHIVKGNKVHPNITAIVVPGSRTVKKEAEKLGLDTIFKNAGFEWREPGCSMCLGMNPDQVPEGVHCASTSNRNFEGRQGKGARTHLVSPAMAAAAAIHGKFVDVRKVVV</sequence>
<keyword id="KW-0004">4Fe-4S</keyword>
<keyword id="KW-0028">Amino-acid biosynthesis</keyword>
<keyword id="KW-0100">Branched-chain amino acid biosynthesis</keyword>
<keyword id="KW-0408">Iron</keyword>
<keyword id="KW-0411">Iron-sulfur</keyword>
<keyword id="KW-0432">Leucine biosynthesis</keyword>
<keyword id="KW-0456">Lyase</keyword>
<keyword id="KW-0479">Metal-binding</keyword>
<reference key="1">
    <citation type="journal article" date="2007" name="PLoS ONE">
        <title>Molecular correlates of host specialization in Staphylococcus aureus.</title>
        <authorList>
            <person name="Herron-Olson L."/>
            <person name="Fitzgerald J.R."/>
            <person name="Musser J.M."/>
            <person name="Kapur V."/>
        </authorList>
    </citation>
    <scope>NUCLEOTIDE SEQUENCE [LARGE SCALE GENOMIC DNA]</scope>
    <source>
        <strain>bovine RF122 / ET3-1</strain>
    </source>
</reference>
<feature type="chain" id="PRO_1000063618" description="3-isopropylmalate dehydratase large subunit">
    <location>
        <begin position="1"/>
        <end position="456"/>
    </location>
</feature>
<feature type="binding site" evidence="1">
    <location>
        <position position="336"/>
    </location>
    <ligand>
        <name>[4Fe-4S] cluster</name>
        <dbReference type="ChEBI" id="CHEBI:49883"/>
    </ligand>
</feature>
<feature type="binding site" evidence="1">
    <location>
        <position position="396"/>
    </location>
    <ligand>
        <name>[4Fe-4S] cluster</name>
        <dbReference type="ChEBI" id="CHEBI:49883"/>
    </ligand>
</feature>
<feature type="binding site" evidence="1">
    <location>
        <position position="399"/>
    </location>
    <ligand>
        <name>[4Fe-4S] cluster</name>
        <dbReference type="ChEBI" id="CHEBI:49883"/>
    </ligand>
</feature>
<gene>
    <name evidence="1" type="primary">leuC</name>
    <name type="ordered locus">SAB1944</name>
</gene>
<protein>
    <recommendedName>
        <fullName evidence="1">3-isopropylmalate dehydratase large subunit</fullName>
        <ecNumber evidence="1">4.2.1.33</ecNumber>
    </recommendedName>
    <alternativeName>
        <fullName evidence="1">Alpha-IPM isomerase</fullName>
        <shortName evidence="1">IPMI</shortName>
    </alternativeName>
    <alternativeName>
        <fullName evidence="1">Isopropylmalate isomerase</fullName>
    </alternativeName>
</protein>
<organism>
    <name type="scientific">Staphylococcus aureus (strain bovine RF122 / ET3-1)</name>
    <dbReference type="NCBI Taxonomy" id="273036"/>
    <lineage>
        <taxon>Bacteria</taxon>
        <taxon>Bacillati</taxon>
        <taxon>Bacillota</taxon>
        <taxon>Bacilli</taxon>
        <taxon>Bacillales</taxon>
        <taxon>Staphylococcaceae</taxon>
        <taxon>Staphylococcus</taxon>
    </lineage>
</organism>